<accession>P25259</accession>
<keyword id="KW-0255">Endonuclease</keyword>
<keyword id="KW-0378">Hydrolase</keyword>
<keyword id="KW-0540">Nuclease</keyword>
<keyword id="KW-0680">Restriction system</keyword>
<proteinExistence type="inferred from homology"/>
<feature type="chain" id="PRO_0000077312" description="Type II restriction enzyme HgiCII">
    <location>
        <begin position="1"/>
        <end position="273"/>
    </location>
</feature>
<gene>
    <name evidence="2" type="primary">hgiCIIR</name>
</gene>
<dbReference type="EC" id="3.1.21.4"/>
<dbReference type="EMBL" id="X55139">
    <property type="protein sequence ID" value="CAA38936.1"/>
    <property type="molecule type" value="Genomic_DNA"/>
</dbReference>
<dbReference type="PIR" id="JC1166">
    <property type="entry name" value="JC1166"/>
</dbReference>
<dbReference type="REBASE" id="1100">
    <property type="entry name" value="HgiCII"/>
</dbReference>
<dbReference type="PRO" id="PR:P25259"/>
<dbReference type="GO" id="GO:0003677">
    <property type="term" value="F:DNA binding"/>
    <property type="evidence" value="ECO:0007669"/>
    <property type="project" value="InterPro"/>
</dbReference>
<dbReference type="GO" id="GO:0009036">
    <property type="term" value="F:type II site-specific deoxyribonuclease activity"/>
    <property type="evidence" value="ECO:0007669"/>
    <property type="project" value="UniProtKB-EC"/>
</dbReference>
<dbReference type="GO" id="GO:0009307">
    <property type="term" value="P:DNA restriction-modification system"/>
    <property type="evidence" value="ECO:0007669"/>
    <property type="project" value="UniProtKB-KW"/>
</dbReference>
<dbReference type="InterPro" id="IPR019045">
    <property type="entry name" value="Restrct_endonuc_II_TdeIII"/>
</dbReference>
<dbReference type="Pfam" id="PF09520">
    <property type="entry name" value="RE_TdeIII"/>
    <property type="match status" value="1"/>
</dbReference>
<comment type="function">
    <text evidence="1 4">A P subtype restriction enzyme that recognizes the double-stranded sequence 5'-GGWCC-3' and cleaves after G-1.</text>
</comment>
<comment type="catalytic activity">
    <reaction>
        <text>Endonucleolytic cleavage of DNA to give specific double-stranded fragments with terminal 5'-phosphates.</text>
        <dbReference type="EC" id="3.1.21.4"/>
    </reaction>
</comment>
<comment type="similarity">
    <text evidence="3">Belongs to the TdeIII type II restriction endonuclease family.</text>
</comment>
<reference key="1">
    <citation type="journal article" date="1992" name="Gene">
        <title>Stepwise cloning and genetic organization of the seemingly unclonable HgiCII restriction-modification system from Herpetosiphon giganteus strain Hpg9, using PCR technique.</title>
        <authorList>
            <person name="Erdmann D."/>
            <person name="Horst G."/>
            <person name="Duesterhoeft A."/>
            <person name="Kroeger M."/>
        </authorList>
    </citation>
    <scope>NUCLEOTIDE SEQUENCE [GENOMIC DNA]</scope>
    <scope>FUNCTION</scope>
    <source>
        <strain>HPG9</strain>
    </source>
</reference>
<reference key="2">
    <citation type="journal article" date="1995" name="Gene">
        <title>Organization and gene expression within restriction-modification systems of Herpetosiphon giganteus.</title>
        <authorList>
            <person name="Kroeger M."/>
            <person name="Blum E."/>
            <person name="Deppe E."/>
            <person name="Duesterhoeft A."/>
            <person name="Erdmann D."/>
            <person name="Kilz S."/>
            <person name="Meyer-Rogge S."/>
            <person name="Moestl D."/>
        </authorList>
    </citation>
    <scope>DISCUSSION OF SEQUENCE</scope>
</reference>
<reference key="3">
    <citation type="journal article" date="2003" name="Nucleic Acids Res.">
        <title>A nomenclature for restriction enzymes, DNA methyltransferases, homing endonucleases and their genes.</title>
        <authorList>
            <person name="Roberts R.J."/>
            <person name="Belfort M."/>
            <person name="Bestor T."/>
            <person name="Bhagwat A.S."/>
            <person name="Bickle T.A."/>
            <person name="Bitinaite J."/>
            <person name="Blumenthal R.M."/>
            <person name="Degtyarev S.K."/>
            <person name="Dryden D.T."/>
            <person name="Dybvig K."/>
            <person name="Firman K."/>
            <person name="Gromova E.S."/>
            <person name="Gumport R.I."/>
            <person name="Halford S.E."/>
            <person name="Hattman S."/>
            <person name="Heitman J."/>
            <person name="Hornby D.P."/>
            <person name="Janulaitis A."/>
            <person name="Jeltsch A."/>
            <person name="Josephsen J."/>
            <person name="Kiss A."/>
            <person name="Klaenhammer T.R."/>
            <person name="Kobayashi I."/>
            <person name="Kong H."/>
            <person name="Krueger D.H."/>
            <person name="Lacks S."/>
            <person name="Marinus M.G."/>
            <person name="Miyahara M."/>
            <person name="Morgan R.D."/>
            <person name="Murray N.E."/>
            <person name="Nagaraja V."/>
            <person name="Piekarowicz A."/>
            <person name="Pingoud A."/>
            <person name="Raleigh E."/>
            <person name="Rao D.N."/>
            <person name="Reich N."/>
            <person name="Repin V.E."/>
            <person name="Selker E.U."/>
            <person name="Shaw P.C."/>
            <person name="Stein D.C."/>
            <person name="Stoddard B.L."/>
            <person name="Szybalski W."/>
            <person name="Trautner T.A."/>
            <person name="Van Etten J.L."/>
            <person name="Vitor J.M."/>
            <person name="Wilson G.G."/>
            <person name="Xu S.Y."/>
        </authorList>
    </citation>
    <scope>NOMENCLATURE</scope>
    <scope>SUBTYPE</scope>
</reference>
<organism>
    <name type="scientific">Herpetosiphon aurantiacus</name>
    <name type="common">Herpetosiphon giganteus</name>
    <dbReference type="NCBI Taxonomy" id="65"/>
    <lineage>
        <taxon>Bacteria</taxon>
        <taxon>Bacillati</taxon>
        <taxon>Chloroflexota</taxon>
        <taxon>Chloroflexia</taxon>
        <taxon>Herpetosiphonales</taxon>
        <taxon>Herpetosiphonaceae</taxon>
        <taxon>Herpetosiphon</taxon>
    </lineage>
</organism>
<evidence type="ECO:0000303" key="1">
    <source>
    </source>
</evidence>
<evidence type="ECO:0000303" key="2">
    <source>
    </source>
</evidence>
<evidence type="ECO:0000305" key="3"/>
<evidence type="ECO:0000305" key="4">
    <source>
    </source>
</evidence>
<sequence length="273" mass="31056">MSINPITRNKIKDYLNGFIDQQLAVYSQRNLREFHDVDSYLAAISSDGDLKPFHASIIPSAIMRLNRFERSLSTGLGSTFEECARVIALDHHAVAIRSYDIHTSLDQAVWASIDLLISNIDRNNQRQIPSITEMLEKLQSIALTGIAENHVVRADLYVQRHDGSELFFEIKSPKPNKGQCLEVMQRLLRIYAIKQNSTLPTHAFYAMAYNPWGANRASYTYSIVKKYTDFTNAVVIGQEFWSLIGESSTYTELLEIYREVGLSKSSEITKKLL</sequence>
<protein>
    <recommendedName>
        <fullName evidence="1">Type II restriction enzyme HgiCII</fullName>
        <shortName evidence="2">R.HgiCII</shortName>
        <ecNumber>3.1.21.4</ecNumber>
    </recommendedName>
    <alternativeName>
        <fullName>Endonuclease HgiCII</fullName>
    </alternativeName>
    <alternativeName>
        <fullName>Type-2 restriction enzyme HgiCII</fullName>
    </alternativeName>
</protein>
<name>T2C2_HERAU</name>